<proteinExistence type="evidence at transcript level"/>
<keyword id="KW-0472">Membrane</keyword>
<keyword id="KW-1185">Reference proteome</keyword>
<keyword id="KW-0812">Transmembrane</keyword>
<keyword id="KW-1133">Transmembrane helix</keyword>
<keyword id="KW-0813">Transport</keyword>
<comment type="subcellular location">
    <subcellularLocation>
        <location evidence="1">Membrane</location>
        <topology evidence="1">Multi-pass membrane protein</topology>
    </subcellularLocation>
</comment>
<comment type="similarity">
    <text evidence="3">Belongs to the multi antimicrobial extrusion (MATE) (TC 2.A.66.1) family.</text>
</comment>
<evidence type="ECO:0000255" key="1"/>
<evidence type="ECO:0000303" key="2">
    <source>
    </source>
</evidence>
<evidence type="ECO:0000305" key="3"/>
<evidence type="ECO:0000312" key="4">
    <source>
        <dbReference type="Araport" id="AT5G52450"/>
    </source>
</evidence>
<evidence type="ECO:0000312" key="5">
    <source>
        <dbReference type="EMBL" id="BAB10542.1"/>
    </source>
</evidence>
<protein>
    <recommendedName>
        <fullName evidence="2">Protein DETOXIFICATION 16</fullName>
        <shortName evidence="2">AtDTX16</shortName>
    </recommendedName>
    <alternativeName>
        <fullName evidence="3">Multidrug and toxic compound extrusion protein 16</fullName>
        <shortName evidence="3">MATE protein 16</shortName>
    </alternativeName>
</protein>
<reference key="1">
    <citation type="journal article" date="2000" name="DNA Res.">
        <title>Structural analysis of Arabidopsis thaliana chromosome 5. X. Sequence features of the regions of 3,076,755 bp covered by sixty P1 and TAC clones.</title>
        <authorList>
            <person name="Sato S."/>
            <person name="Nakamura Y."/>
            <person name="Kaneko T."/>
            <person name="Katoh T."/>
            <person name="Asamizu E."/>
            <person name="Kotani H."/>
            <person name="Tabata S."/>
        </authorList>
    </citation>
    <scope>NUCLEOTIDE SEQUENCE [LARGE SCALE GENOMIC DNA]</scope>
    <source>
        <strain>cv. Columbia</strain>
    </source>
</reference>
<reference key="2">
    <citation type="journal article" date="2017" name="Plant J.">
        <title>Araport11: a complete reannotation of the Arabidopsis thaliana reference genome.</title>
        <authorList>
            <person name="Cheng C.Y."/>
            <person name="Krishnakumar V."/>
            <person name="Chan A.P."/>
            <person name="Thibaud-Nissen F."/>
            <person name="Schobel S."/>
            <person name="Town C.D."/>
        </authorList>
    </citation>
    <scope>GENOME REANNOTATION</scope>
    <source>
        <strain>cv. Columbia</strain>
    </source>
</reference>
<reference key="3">
    <citation type="journal article" date="2003" name="Science">
        <title>Empirical analysis of transcriptional activity in the Arabidopsis genome.</title>
        <authorList>
            <person name="Yamada K."/>
            <person name="Lim J."/>
            <person name="Dale J.M."/>
            <person name="Chen H."/>
            <person name="Shinn P."/>
            <person name="Palm C.J."/>
            <person name="Southwick A.M."/>
            <person name="Wu H.C."/>
            <person name="Kim C.J."/>
            <person name="Nguyen M."/>
            <person name="Pham P.K."/>
            <person name="Cheuk R.F."/>
            <person name="Karlin-Newmann G."/>
            <person name="Liu S.X."/>
            <person name="Lam B."/>
            <person name="Sakano H."/>
            <person name="Wu T."/>
            <person name="Yu G."/>
            <person name="Miranda M."/>
            <person name="Quach H.L."/>
            <person name="Tripp M."/>
            <person name="Chang C.H."/>
            <person name="Lee J.M."/>
            <person name="Toriumi M.J."/>
            <person name="Chan M.M."/>
            <person name="Tang C.C."/>
            <person name="Onodera C.S."/>
            <person name="Deng J.M."/>
            <person name="Akiyama K."/>
            <person name="Ansari Y."/>
            <person name="Arakawa T."/>
            <person name="Banh J."/>
            <person name="Banno F."/>
            <person name="Bowser L."/>
            <person name="Brooks S.Y."/>
            <person name="Carninci P."/>
            <person name="Chao Q."/>
            <person name="Choy N."/>
            <person name="Enju A."/>
            <person name="Goldsmith A.D."/>
            <person name="Gurjal M."/>
            <person name="Hansen N.F."/>
            <person name="Hayashizaki Y."/>
            <person name="Johnson-Hopson C."/>
            <person name="Hsuan V.W."/>
            <person name="Iida K."/>
            <person name="Karnes M."/>
            <person name="Khan S."/>
            <person name="Koesema E."/>
            <person name="Ishida J."/>
            <person name="Jiang P.X."/>
            <person name="Jones T."/>
            <person name="Kawai J."/>
            <person name="Kamiya A."/>
            <person name="Meyers C."/>
            <person name="Nakajima M."/>
            <person name="Narusaka M."/>
            <person name="Seki M."/>
            <person name="Sakurai T."/>
            <person name="Satou M."/>
            <person name="Tamse R."/>
            <person name="Vaysberg M."/>
            <person name="Wallender E.K."/>
            <person name="Wong C."/>
            <person name="Yamamura Y."/>
            <person name="Yuan S."/>
            <person name="Shinozaki K."/>
            <person name="Davis R.W."/>
            <person name="Theologis A."/>
            <person name="Ecker J.R."/>
        </authorList>
    </citation>
    <scope>NUCLEOTIDE SEQUENCE [LARGE SCALE MRNA]</scope>
    <source>
        <strain>cv. Columbia</strain>
    </source>
</reference>
<reference key="4">
    <citation type="journal article" date="2002" name="J. Biol. Chem.">
        <title>Functional cloning and characterization of a plant efflux carrier for multidrug and heavy metal detoxification.</title>
        <authorList>
            <person name="Li L."/>
            <person name="He Z."/>
            <person name="Pandey G.K."/>
            <person name="Tsuchiya T."/>
            <person name="Luan S."/>
        </authorList>
    </citation>
    <scope>GENE FAMILY</scope>
    <scope>NOMENCLATURE</scope>
</reference>
<reference key="5">
    <citation type="journal article" date="2003" name="Eur. J. Biochem.">
        <title>The multidrug/oligosaccharidyl-lipid/polysaccharide (MOP) exporter superfamily.</title>
        <authorList>
            <person name="Hvorup R.N."/>
            <person name="Winnen B."/>
            <person name="Chang A.B."/>
            <person name="Jiang Y."/>
            <person name="Zhou X.F."/>
            <person name="Saier M.H. Jr."/>
        </authorList>
    </citation>
    <scope>GENE FAMILY</scope>
</reference>
<feature type="chain" id="PRO_0000434059" description="Protein DETOXIFICATION 16">
    <location>
        <begin position="1"/>
        <end position="486"/>
    </location>
</feature>
<feature type="transmembrane region" description="Helical" evidence="1">
    <location>
        <begin position="35"/>
        <end position="55"/>
    </location>
</feature>
<feature type="transmembrane region" description="Helical" evidence="1">
    <location>
        <begin position="68"/>
        <end position="88"/>
    </location>
</feature>
<feature type="transmembrane region" description="Helical" evidence="1">
    <location>
        <begin position="117"/>
        <end position="137"/>
    </location>
</feature>
<feature type="transmembrane region" description="Helical" evidence="1">
    <location>
        <begin position="142"/>
        <end position="162"/>
    </location>
</feature>
<feature type="transmembrane region" description="Helical" evidence="1">
    <location>
        <begin position="179"/>
        <end position="199"/>
    </location>
</feature>
<feature type="transmembrane region" description="Helical" evidence="1">
    <location>
        <begin position="207"/>
        <end position="227"/>
    </location>
</feature>
<feature type="transmembrane region" description="Helical" evidence="1">
    <location>
        <begin position="259"/>
        <end position="279"/>
    </location>
</feature>
<feature type="transmembrane region" description="Helical" evidence="1">
    <location>
        <begin position="288"/>
        <end position="308"/>
    </location>
</feature>
<feature type="transmembrane region" description="Helical" evidence="1">
    <location>
        <begin position="331"/>
        <end position="351"/>
    </location>
</feature>
<feature type="transmembrane region" description="Helical" evidence="1">
    <location>
        <begin position="365"/>
        <end position="385"/>
    </location>
</feature>
<feature type="transmembrane region" description="Helical" evidence="1">
    <location>
        <begin position="401"/>
        <end position="421"/>
    </location>
</feature>
<feature type="transmembrane region" description="Helical" evidence="1">
    <location>
        <begin position="433"/>
        <end position="453"/>
    </location>
</feature>
<dbReference type="EMBL" id="AB019226">
    <property type="protein sequence ID" value="BAB10542.1"/>
    <property type="molecule type" value="Genomic_DNA"/>
</dbReference>
<dbReference type="EMBL" id="CP002688">
    <property type="protein sequence ID" value="AED96215.1"/>
    <property type="molecule type" value="Genomic_DNA"/>
</dbReference>
<dbReference type="EMBL" id="AY046054">
    <property type="protein sequence ID" value="AAK76728.1"/>
    <property type="molecule type" value="mRNA"/>
</dbReference>
<dbReference type="EMBL" id="AY079316">
    <property type="protein sequence ID" value="AAL85047.1"/>
    <property type="molecule type" value="mRNA"/>
</dbReference>
<dbReference type="RefSeq" id="NP_200058.1">
    <property type="nucleotide sequence ID" value="NM_124624.4"/>
</dbReference>
<dbReference type="SMR" id="Q9FHB6"/>
<dbReference type="FunCoup" id="Q9FHB6">
    <property type="interactions" value="317"/>
</dbReference>
<dbReference type="STRING" id="3702.Q9FHB6"/>
<dbReference type="iPTMnet" id="Q9FHB6"/>
<dbReference type="PaxDb" id="3702-AT5G52450.1"/>
<dbReference type="ProteomicsDB" id="221932"/>
<dbReference type="EnsemblPlants" id="AT5G52450.1">
    <property type="protein sequence ID" value="AT5G52450.1"/>
    <property type="gene ID" value="AT5G52450"/>
</dbReference>
<dbReference type="GeneID" id="835321"/>
<dbReference type="Gramene" id="AT5G52450.1">
    <property type="protein sequence ID" value="AT5G52450.1"/>
    <property type="gene ID" value="AT5G52450"/>
</dbReference>
<dbReference type="KEGG" id="ath:AT5G52450"/>
<dbReference type="Araport" id="AT5G52450"/>
<dbReference type="TAIR" id="AT5G52450"/>
<dbReference type="eggNOG" id="KOG1347">
    <property type="taxonomic scope" value="Eukaryota"/>
</dbReference>
<dbReference type="HOGENOM" id="CLU_012893_1_0_1"/>
<dbReference type="InParanoid" id="Q9FHB6"/>
<dbReference type="OMA" id="WANTEHL"/>
<dbReference type="PhylomeDB" id="Q9FHB6"/>
<dbReference type="PRO" id="PR:Q9FHB6"/>
<dbReference type="Proteomes" id="UP000006548">
    <property type="component" value="Chromosome 5"/>
</dbReference>
<dbReference type="ExpressionAtlas" id="Q9FHB6">
    <property type="expression patterns" value="baseline and differential"/>
</dbReference>
<dbReference type="GO" id="GO:0016020">
    <property type="term" value="C:membrane"/>
    <property type="evidence" value="ECO:0007669"/>
    <property type="project" value="UniProtKB-SubCell"/>
</dbReference>
<dbReference type="GO" id="GO:0000325">
    <property type="term" value="C:plant-type vacuole"/>
    <property type="evidence" value="ECO:0007005"/>
    <property type="project" value="TAIR"/>
</dbReference>
<dbReference type="GO" id="GO:0009536">
    <property type="term" value="C:plastid"/>
    <property type="evidence" value="ECO:0007005"/>
    <property type="project" value="TAIR"/>
</dbReference>
<dbReference type="GO" id="GO:0015297">
    <property type="term" value="F:antiporter activity"/>
    <property type="evidence" value="ECO:0007669"/>
    <property type="project" value="InterPro"/>
</dbReference>
<dbReference type="GO" id="GO:0042910">
    <property type="term" value="F:xenobiotic transmembrane transporter activity"/>
    <property type="evidence" value="ECO:0007669"/>
    <property type="project" value="InterPro"/>
</dbReference>
<dbReference type="GO" id="GO:0009624">
    <property type="term" value="P:response to nematode"/>
    <property type="evidence" value="ECO:0007007"/>
    <property type="project" value="TAIR"/>
</dbReference>
<dbReference type="GO" id="GO:1990961">
    <property type="term" value="P:xenobiotic detoxification by transmembrane export across the plasma membrane"/>
    <property type="evidence" value="ECO:0007669"/>
    <property type="project" value="InterPro"/>
</dbReference>
<dbReference type="CDD" id="cd13132">
    <property type="entry name" value="MATE_eukaryotic"/>
    <property type="match status" value="1"/>
</dbReference>
<dbReference type="InterPro" id="IPR045069">
    <property type="entry name" value="MATE_euk"/>
</dbReference>
<dbReference type="InterPro" id="IPR002528">
    <property type="entry name" value="MATE_fam"/>
</dbReference>
<dbReference type="NCBIfam" id="TIGR00797">
    <property type="entry name" value="matE"/>
    <property type="match status" value="1"/>
</dbReference>
<dbReference type="PANTHER" id="PTHR11206">
    <property type="entry name" value="MULTIDRUG RESISTANCE PROTEIN"/>
    <property type="match status" value="1"/>
</dbReference>
<dbReference type="Pfam" id="PF01554">
    <property type="entry name" value="MatE"/>
    <property type="match status" value="2"/>
</dbReference>
<gene>
    <name evidence="2" type="primary">DTX16</name>
    <name evidence="4" type="ordered locus">At5g52450</name>
    <name evidence="5" type="ORF">K24M7.20</name>
</gene>
<organism>
    <name type="scientific">Arabidopsis thaliana</name>
    <name type="common">Mouse-ear cress</name>
    <dbReference type="NCBI Taxonomy" id="3702"/>
    <lineage>
        <taxon>Eukaryota</taxon>
        <taxon>Viridiplantae</taxon>
        <taxon>Streptophyta</taxon>
        <taxon>Embryophyta</taxon>
        <taxon>Tracheophyta</taxon>
        <taxon>Spermatophyta</taxon>
        <taxon>Magnoliopsida</taxon>
        <taxon>eudicotyledons</taxon>
        <taxon>Gunneridae</taxon>
        <taxon>Pentapetalae</taxon>
        <taxon>rosids</taxon>
        <taxon>malvids</taxon>
        <taxon>Brassicales</taxon>
        <taxon>Brassicaceae</taxon>
        <taxon>Camelineae</taxon>
        <taxon>Arabidopsis</taxon>
    </lineage>
</organism>
<name>DTX16_ARATH</name>
<accession>Q9FHB6</accession>
<sequence>MRDDRERGEGDLSWPLIGEKSSVKEEVKKQLWLSGPLIAVSLLQFCLQVISVMFVGHLGSLPLSAASIATSFASVTGFSFLMGTASALDTLCGQAYGAKKYGMLGIQMQRAMFVLTLASIPLSIIWANTEHLLVFFGQNKSIATLAGSYAKFMIPSIFAYGLLQCFNRFLQAQNNVFPVVFCSGVTTSLHVLLCWVLVFKSGLGFQGAALANSISYWLNVVLLFCYVKFSPSCSLTWTGFSKEALRDILPFLRLAVPSALMVCLEMWSFELLVLLSGLLPNPVLETSVLSICLNTSGTMWMIPFGLSGAASTRISNELGAGNPKVAKLAVRVVICIAVAESIVIGSVLILIRNIWGLAYSSELEVVSYVASMMPILALGNFLDSLQCVLSGVARGCGWQKIGAIINLGSYYLVGVPSGLLLAFHFHVGGRGLWLGIICALVVQVFGLGLVTIFTNWDEEAKKATNRIESSSSVKDFAVDDRSVVVF</sequence>